<feature type="chain" id="PRO_1000195984" description="Large ribosomal subunit protein bL32">
    <location>
        <begin position="1"/>
        <end position="62"/>
    </location>
</feature>
<feature type="region of interest" description="Disordered" evidence="2">
    <location>
        <begin position="1"/>
        <end position="62"/>
    </location>
</feature>
<feature type="compositionally biased region" description="Basic residues" evidence="2">
    <location>
        <begin position="1"/>
        <end position="16"/>
    </location>
</feature>
<feature type="compositionally biased region" description="Basic and acidic residues" evidence="2">
    <location>
        <begin position="28"/>
        <end position="44"/>
    </location>
</feature>
<evidence type="ECO:0000255" key="1">
    <source>
        <dbReference type="HAMAP-Rule" id="MF_00340"/>
    </source>
</evidence>
<evidence type="ECO:0000256" key="2">
    <source>
        <dbReference type="SAM" id="MobiDB-lite"/>
    </source>
</evidence>
<evidence type="ECO:0000305" key="3"/>
<dbReference type="EMBL" id="CP001280">
    <property type="protein sequence ID" value="ACK49790.1"/>
    <property type="molecule type" value="Genomic_DNA"/>
</dbReference>
<dbReference type="RefSeq" id="WP_012589860.1">
    <property type="nucleotide sequence ID" value="NC_011666.1"/>
</dbReference>
<dbReference type="SMR" id="B8ER45"/>
<dbReference type="STRING" id="395965.Msil_0820"/>
<dbReference type="KEGG" id="msl:Msil_0820"/>
<dbReference type="eggNOG" id="COG0333">
    <property type="taxonomic scope" value="Bacteria"/>
</dbReference>
<dbReference type="HOGENOM" id="CLU_129084_2_2_5"/>
<dbReference type="OrthoDB" id="9801927at2"/>
<dbReference type="Proteomes" id="UP000002257">
    <property type="component" value="Chromosome"/>
</dbReference>
<dbReference type="GO" id="GO:0015934">
    <property type="term" value="C:large ribosomal subunit"/>
    <property type="evidence" value="ECO:0007669"/>
    <property type="project" value="InterPro"/>
</dbReference>
<dbReference type="GO" id="GO:0003735">
    <property type="term" value="F:structural constituent of ribosome"/>
    <property type="evidence" value="ECO:0007669"/>
    <property type="project" value="InterPro"/>
</dbReference>
<dbReference type="GO" id="GO:0006412">
    <property type="term" value="P:translation"/>
    <property type="evidence" value="ECO:0007669"/>
    <property type="project" value="UniProtKB-UniRule"/>
</dbReference>
<dbReference type="Gene3D" id="1.20.5.640">
    <property type="entry name" value="Single helix bin"/>
    <property type="match status" value="1"/>
</dbReference>
<dbReference type="HAMAP" id="MF_00340">
    <property type="entry name" value="Ribosomal_bL32"/>
    <property type="match status" value="1"/>
</dbReference>
<dbReference type="InterPro" id="IPR002677">
    <property type="entry name" value="Ribosomal_bL32"/>
</dbReference>
<dbReference type="InterPro" id="IPR044957">
    <property type="entry name" value="Ribosomal_bL32_bact"/>
</dbReference>
<dbReference type="InterPro" id="IPR011332">
    <property type="entry name" value="Ribosomal_zn-bd"/>
</dbReference>
<dbReference type="NCBIfam" id="TIGR01031">
    <property type="entry name" value="rpmF_bact"/>
    <property type="match status" value="1"/>
</dbReference>
<dbReference type="PANTHER" id="PTHR35534">
    <property type="entry name" value="50S RIBOSOMAL PROTEIN L32"/>
    <property type="match status" value="1"/>
</dbReference>
<dbReference type="PANTHER" id="PTHR35534:SF1">
    <property type="entry name" value="LARGE RIBOSOMAL SUBUNIT PROTEIN BL32"/>
    <property type="match status" value="1"/>
</dbReference>
<dbReference type="Pfam" id="PF01783">
    <property type="entry name" value="Ribosomal_L32p"/>
    <property type="match status" value="1"/>
</dbReference>
<dbReference type="SUPFAM" id="SSF57829">
    <property type="entry name" value="Zn-binding ribosomal proteins"/>
    <property type="match status" value="1"/>
</dbReference>
<organism>
    <name type="scientific">Methylocella silvestris (strain DSM 15510 / CIP 108128 / LMG 27833 / NCIMB 13906 / BL2)</name>
    <dbReference type="NCBI Taxonomy" id="395965"/>
    <lineage>
        <taxon>Bacteria</taxon>
        <taxon>Pseudomonadati</taxon>
        <taxon>Pseudomonadota</taxon>
        <taxon>Alphaproteobacteria</taxon>
        <taxon>Hyphomicrobiales</taxon>
        <taxon>Beijerinckiaceae</taxon>
        <taxon>Methylocella</taxon>
    </lineage>
</organism>
<comment type="similarity">
    <text evidence="1">Belongs to the bacterial ribosomal protein bL32 family.</text>
</comment>
<protein>
    <recommendedName>
        <fullName evidence="1">Large ribosomal subunit protein bL32</fullName>
    </recommendedName>
    <alternativeName>
        <fullName evidence="3">50S ribosomal protein L32</fullName>
    </alternativeName>
</protein>
<sequence>MAVPKRKTSPMKRGFRRSADALAAPTYVEDKDSGELRRPHHVDLKTGMYRGRQILTPKNKEA</sequence>
<gene>
    <name evidence="1" type="primary">rpmF</name>
    <name type="ordered locus">Msil_0820</name>
</gene>
<reference key="1">
    <citation type="journal article" date="2010" name="J. Bacteriol.">
        <title>Complete genome sequence of the aerobic facultative methanotroph Methylocella silvestris BL2.</title>
        <authorList>
            <person name="Chen Y."/>
            <person name="Crombie A."/>
            <person name="Rahman M.T."/>
            <person name="Dedysh S.N."/>
            <person name="Liesack W."/>
            <person name="Stott M.B."/>
            <person name="Alam M."/>
            <person name="Theisen A.R."/>
            <person name="Murrell J.C."/>
            <person name="Dunfield P.F."/>
        </authorList>
    </citation>
    <scope>NUCLEOTIDE SEQUENCE [LARGE SCALE GENOMIC DNA]</scope>
    <source>
        <strain>DSM 15510 / CIP 108128 / LMG 27833 / NCIMB 13906 / BL2</strain>
    </source>
</reference>
<proteinExistence type="inferred from homology"/>
<name>RL32_METSB</name>
<keyword id="KW-1185">Reference proteome</keyword>
<keyword id="KW-0687">Ribonucleoprotein</keyword>
<keyword id="KW-0689">Ribosomal protein</keyword>
<accession>B8ER45</accession>